<reference key="1">
    <citation type="journal article" date="2002" name="Nature">
        <title>Sequence and analysis of chromosome 2 of Dictyostelium discoideum.</title>
        <authorList>
            <person name="Gloeckner G."/>
            <person name="Eichinger L."/>
            <person name="Szafranski K."/>
            <person name="Pachebat J.A."/>
            <person name="Bankier A.T."/>
            <person name="Dear P.H."/>
            <person name="Lehmann R."/>
            <person name="Baumgart C."/>
            <person name="Parra G."/>
            <person name="Abril J.F."/>
            <person name="Guigo R."/>
            <person name="Kumpf K."/>
            <person name="Tunggal B."/>
            <person name="Cox E.C."/>
            <person name="Quail M.A."/>
            <person name="Platzer M."/>
            <person name="Rosenthal A."/>
            <person name="Noegel A.A."/>
        </authorList>
    </citation>
    <scope>NUCLEOTIDE SEQUENCE [LARGE SCALE GENOMIC DNA]</scope>
    <source>
        <strain>AX4</strain>
    </source>
</reference>
<reference key="2">
    <citation type="journal article" date="2005" name="Nature">
        <title>The genome of the social amoeba Dictyostelium discoideum.</title>
        <authorList>
            <person name="Eichinger L."/>
            <person name="Pachebat J.A."/>
            <person name="Gloeckner G."/>
            <person name="Rajandream M.A."/>
            <person name="Sucgang R."/>
            <person name="Berriman M."/>
            <person name="Song J."/>
            <person name="Olsen R."/>
            <person name="Szafranski K."/>
            <person name="Xu Q."/>
            <person name="Tunggal B."/>
            <person name="Kummerfeld S."/>
            <person name="Madera M."/>
            <person name="Konfortov B.A."/>
            <person name="Rivero F."/>
            <person name="Bankier A.T."/>
            <person name="Lehmann R."/>
            <person name="Hamlin N."/>
            <person name="Davies R."/>
            <person name="Gaudet P."/>
            <person name="Fey P."/>
            <person name="Pilcher K."/>
            <person name="Chen G."/>
            <person name="Saunders D."/>
            <person name="Sodergren E.J."/>
            <person name="Davis P."/>
            <person name="Kerhornou A."/>
            <person name="Nie X."/>
            <person name="Hall N."/>
            <person name="Anjard C."/>
            <person name="Hemphill L."/>
            <person name="Bason N."/>
            <person name="Farbrother P."/>
            <person name="Desany B."/>
            <person name="Just E."/>
            <person name="Morio T."/>
            <person name="Rost R."/>
            <person name="Churcher C.M."/>
            <person name="Cooper J."/>
            <person name="Haydock S."/>
            <person name="van Driessche N."/>
            <person name="Cronin A."/>
            <person name="Goodhead I."/>
            <person name="Muzny D.M."/>
            <person name="Mourier T."/>
            <person name="Pain A."/>
            <person name="Lu M."/>
            <person name="Harper D."/>
            <person name="Lindsay R."/>
            <person name="Hauser H."/>
            <person name="James K.D."/>
            <person name="Quiles M."/>
            <person name="Madan Babu M."/>
            <person name="Saito T."/>
            <person name="Buchrieser C."/>
            <person name="Wardroper A."/>
            <person name="Felder M."/>
            <person name="Thangavelu M."/>
            <person name="Johnson D."/>
            <person name="Knights A."/>
            <person name="Loulseged H."/>
            <person name="Mungall K.L."/>
            <person name="Oliver K."/>
            <person name="Price C."/>
            <person name="Quail M.A."/>
            <person name="Urushihara H."/>
            <person name="Hernandez J."/>
            <person name="Rabbinowitsch E."/>
            <person name="Steffen D."/>
            <person name="Sanders M."/>
            <person name="Ma J."/>
            <person name="Kohara Y."/>
            <person name="Sharp S."/>
            <person name="Simmonds M.N."/>
            <person name="Spiegler S."/>
            <person name="Tivey A."/>
            <person name="Sugano S."/>
            <person name="White B."/>
            <person name="Walker D."/>
            <person name="Woodward J.R."/>
            <person name="Winckler T."/>
            <person name="Tanaka Y."/>
            <person name="Shaulsky G."/>
            <person name="Schleicher M."/>
            <person name="Weinstock G.M."/>
            <person name="Rosenthal A."/>
            <person name="Cox E.C."/>
            <person name="Chisholm R.L."/>
            <person name="Gibbs R.A."/>
            <person name="Loomis W.F."/>
            <person name="Platzer M."/>
            <person name="Kay R.R."/>
            <person name="Williams J.G."/>
            <person name="Dear P.H."/>
            <person name="Noegel A.A."/>
            <person name="Barrell B.G."/>
            <person name="Kuspa A."/>
        </authorList>
    </citation>
    <scope>NUCLEOTIDE SEQUENCE [LARGE SCALE GENOMIC DNA]</scope>
    <source>
        <strain>AX4</strain>
    </source>
</reference>
<reference key="3">
    <citation type="journal article" date="2007" name="Biochimie">
        <title>Mitochondrial carrier family: repertoire and peculiarities of the cellular slime mould Dictyostelium discoideum.</title>
        <authorList>
            <person name="Satre M."/>
            <person name="Mattei S."/>
            <person name="Aubry L."/>
            <person name="Gaudet P."/>
            <person name="Pelosi L."/>
            <person name="Brandolin G."/>
            <person name="Klein G."/>
        </authorList>
    </citation>
    <scope>REVIEW</scope>
</reference>
<name>S2540_DICDI</name>
<gene>
    <name evidence="4" type="primary">mcfH</name>
    <name type="synonym">slc25a40</name>
    <name type="ORF">DDB_G0275985</name>
</gene>
<comment type="function">
    <text evidence="1">Mitochondrial transporter required for glutathione import into mitochondria.</text>
</comment>
<comment type="subcellular location">
    <subcellularLocation>
        <location evidence="1">Mitochondrion inner membrane</location>
        <topology evidence="2">Multi-pass membrane protein</topology>
    </subcellularLocation>
</comment>
<comment type="similarity">
    <text evidence="5">Belongs to the mitochondrial carrier (TC 2.A.29) family.</text>
</comment>
<dbReference type="EMBL" id="AAFI02000013">
    <property type="protein sequence ID" value="EAL69449.1"/>
    <property type="molecule type" value="Genomic_DNA"/>
</dbReference>
<dbReference type="RefSeq" id="XP_643363.1">
    <property type="nucleotide sequence ID" value="XM_638271.1"/>
</dbReference>
<dbReference type="SMR" id="Q552L9"/>
<dbReference type="FunCoup" id="Q552L9">
    <property type="interactions" value="549"/>
</dbReference>
<dbReference type="STRING" id="44689.Q552L9"/>
<dbReference type="GlyGen" id="Q552L9">
    <property type="glycosylation" value="1 site"/>
</dbReference>
<dbReference type="PaxDb" id="44689-DDB0237608"/>
<dbReference type="EnsemblProtists" id="EAL69449">
    <property type="protein sequence ID" value="EAL69449"/>
    <property type="gene ID" value="DDB_G0275985"/>
</dbReference>
<dbReference type="GeneID" id="8620246"/>
<dbReference type="KEGG" id="ddi:DDB_G0275985"/>
<dbReference type="dictyBase" id="DDB_G0275985">
    <property type="gene designation" value="mcfH"/>
</dbReference>
<dbReference type="VEuPathDB" id="AmoebaDB:DDB_G0275985"/>
<dbReference type="eggNOG" id="KOG0761">
    <property type="taxonomic scope" value="Eukaryota"/>
</dbReference>
<dbReference type="HOGENOM" id="CLU_015166_0_0_1"/>
<dbReference type="InParanoid" id="Q552L9"/>
<dbReference type="OMA" id="YWWGYES"/>
<dbReference type="PhylomeDB" id="Q552L9"/>
<dbReference type="PRO" id="PR:Q552L9"/>
<dbReference type="Proteomes" id="UP000002195">
    <property type="component" value="Chromosome 2"/>
</dbReference>
<dbReference type="GO" id="GO:0005743">
    <property type="term" value="C:mitochondrial inner membrane"/>
    <property type="evidence" value="ECO:0007669"/>
    <property type="project" value="UniProtKB-SubCell"/>
</dbReference>
<dbReference type="GO" id="GO:0005739">
    <property type="term" value="C:mitochondrion"/>
    <property type="evidence" value="ECO:0000318"/>
    <property type="project" value="GO_Central"/>
</dbReference>
<dbReference type="GO" id="GO:0170036">
    <property type="term" value="P:import into the mitochondrion"/>
    <property type="evidence" value="ECO:0000318"/>
    <property type="project" value="GO_Central"/>
</dbReference>
<dbReference type="Gene3D" id="1.50.40.10">
    <property type="entry name" value="Mitochondrial carrier domain"/>
    <property type="match status" value="1"/>
</dbReference>
<dbReference type="InterPro" id="IPR002067">
    <property type="entry name" value="Mit_carrier"/>
</dbReference>
<dbReference type="InterPro" id="IPR018108">
    <property type="entry name" value="Mitochondrial_sb/sol_carrier"/>
</dbReference>
<dbReference type="InterPro" id="IPR023395">
    <property type="entry name" value="Mt_carrier_dom_sf"/>
</dbReference>
<dbReference type="InterPro" id="IPR045315">
    <property type="entry name" value="Mtm1-like"/>
</dbReference>
<dbReference type="PANTHER" id="PTHR45760">
    <property type="entry name" value="FI19922P1-RELATED"/>
    <property type="match status" value="1"/>
</dbReference>
<dbReference type="PANTHER" id="PTHR45760:SF2">
    <property type="entry name" value="FI19922P1-RELATED"/>
    <property type="match status" value="1"/>
</dbReference>
<dbReference type="Pfam" id="PF00153">
    <property type="entry name" value="Mito_carr"/>
    <property type="match status" value="3"/>
</dbReference>
<dbReference type="PRINTS" id="PR00926">
    <property type="entry name" value="MITOCARRIER"/>
</dbReference>
<dbReference type="SUPFAM" id="SSF103506">
    <property type="entry name" value="Mitochondrial carrier"/>
    <property type="match status" value="1"/>
</dbReference>
<dbReference type="PROSITE" id="PS50920">
    <property type="entry name" value="SOLCAR"/>
    <property type="match status" value="3"/>
</dbReference>
<evidence type="ECO:0000250" key="1">
    <source>
        <dbReference type="UniProtKB" id="Q9BZJ4"/>
    </source>
</evidence>
<evidence type="ECO:0000255" key="2"/>
<evidence type="ECO:0000256" key="3">
    <source>
        <dbReference type="SAM" id="MobiDB-lite"/>
    </source>
</evidence>
<evidence type="ECO:0000303" key="4">
    <source>
    </source>
</evidence>
<evidence type="ECO:0000305" key="5"/>
<protein>
    <recommendedName>
        <fullName evidence="4">Mitochondrial substrate carrier family protein H</fullName>
    </recommendedName>
    <alternativeName>
        <fullName evidence="5">Solute carrier family 25 member 40 homolog</fullName>
    </alternativeName>
</protein>
<accession>Q552L9</accession>
<proteinExistence type="inferred from homology"/>
<sequence length="366" mass="40633">MLSNSVNNNNNNNNINNSNSNNNDSNIHKNVKKLMVASIFGGIMSSLIVTPLDVVKTRLQTQNTGSHINQKHVFKGTLDAFKKIYKNEGPLTFWRGVTPSLLMTIPSATIYFTSYEYLKEYLYQFNDTEAYNIYTVPLVAGTLARIFSASVTSPFELLRTNSQGIVLQNAYKNTVAMAASSSTATIGTIPLSSEQRFNSFKLYRDIVNNVGIKGLWRGLGPTLVRDVPFSAIYWAGYEVLKNKLMKSQIDPNFSRNSKSPFFINFIAGATSGTLAAVLTTPIDVIKTRIQMSAQQTLSPSLTPQQQLDFIKKNNSSIYHLKQILSQEGWKGLTKGLVPRVAKVSPACAIMISTFEYIKQSHIADDN</sequence>
<keyword id="KW-0472">Membrane</keyword>
<keyword id="KW-0496">Mitochondrion</keyword>
<keyword id="KW-0999">Mitochondrion inner membrane</keyword>
<keyword id="KW-1185">Reference proteome</keyword>
<keyword id="KW-0677">Repeat</keyword>
<keyword id="KW-0812">Transmembrane</keyword>
<keyword id="KW-1133">Transmembrane helix</keyword>
<keyword id="KW-0813">Transport</keyword>
<feature type="chain" id="PRO_0000329412" description="Mitochondrial substrate carrier family protein H">
    <location>
        <begin position="1"/>
        <end position="366"/>
    </location>
</feature>
<feature type="transmembrane region" description="Helical; Name=1" evidence="2">
    <location>
        <begin position="35"/>
        <end position="55"/>
    </location>
</feature>
<feature type="transmembrane region" description="Helical; Name=2" evidence="2">
    <location>
        <begin position="96"/>
        <end position="112"/>
    </location>
</feature>
<feature type="transmembrane region" description="Helical; Name=3" evidence="2">
    <location>
        <begin position="133"/>
        <end position="151"/>
    </location>
</feature>
<feature type="transmembrane region" description="Helical; Name=4" evidence="2">
    <location>
        <begin position="175"/>
        <end position="192"/>
    </location>
</feature>
<feature type="transmembrane region" description="Helical; Name=5" evidence="2">
    <location>
        <begin position="262"/>
        <end position="282"/>
    </location>
</feature>
<feature type="transmembrane region" description="Helical; Name=6" evidence="2">
    <location>
        <begin position="340"/>
        <end position="357"/>
    </location>
</feature>
<feature type="repeat" description="Solcar 1">
    <location>
        <begin position="29"/>
        <end position="121"/>
    </location>
</feature>
<feature type="repeat" description="Solcar 2">
    <location>
        <begin position="132"/>
        <end position="243"/>
    </location>
</feature>
<feature type="repeat" description="Solcar 3">
    <location>
        <begin position="259"/>
        <end position="360"/>
    </location>
</feature>
<feature type="region of interest" description="Disordered" evidence="3">
    <location>
        <begin position="1"/>
        <end position="26"/>
    </location>
</feature>
<feature type="compositionally biased region" description="Low complexity" evidence="3">
    <location>
        <begin position="1"/>
        <end position="25"/>
    </location>
</feature>
<organism>
    <name type="scientific">Dictyostelium discoideum</name>
    <name type="common">Social amoeba</name>
    <dbReference type="NCBI Taxonomy" id="44689"/>
    <lineage>
        <taxon>Eukaryota</taxon>
        <taxon>Amoebozoa</taxon>
        <taxon>Evosea</taxon>
        <taxon>Eumycetozoa</taxon>
        <taxon>Dictyostelia</taxon>
        <taxon>Dictyosteliales</taxon>
        <taxon>Dictyosteliaceae</taxon>
        <taxon>Dictyostelium</taxon>
    </lineage>
</organism>